<proteinExistence type="evidence at protein level"/>
<dbReference type="EMBL" id="CP000143">
    <property type="protein sequence ID" value="ABA79646.1"/>
    <property type="molecule type" value="Genomic_DNA"/>
</dbReference>
<dbReference type="PIR" id="A00141">
    <property type="entry name" value="CCRFCS"/>
</dbReference>
<dbReference type="RefSeq" id="WP_009566035.1">
    <property type="nucleotide sequence ID" value="NC_007493.2"/>
</dbReference>
<dbReference type="RefSeq" id="YP_353547.1">
    <property type="nucleotide sequence ID" value="NC_007493.2"/>
</dbReference>
<dbReference type="PDB" id="1GQA">
    <property type="method" value="X-ray"/>
    <property type="resolution" value="1.80 A"/>
    <property type="chains" value="A/D=20-149"/>
</dbReference>
<dbReference type="PDBsum" id="1GQA"/>
<dbReference type="SMR" id="P00148"/>
<dbReference type="STRING" id="272943.RSP_0474"/>
<dbReference type="DrugBank" id="DB03317">
    <property type="generic name" value="Ferroheme C"/>
</dbReference>
<dbReference type="MetOSite" id="P00148"/>
<dbReference type="EnsemblBacteria" id="ABA79646">
    <property type="protein sequence ID" value="ABA79646"/>
    <property type="gene ID" value="RSP_0474"/>
</dbReference>
<dbReference type="GeneID" id="3718637"/>
<dbReference type="KEGG" id="rsp:RSP_0474"/>
<dbReference type="PATRIC" id="fig|272943.9.peg.2423"/>
<dbReference type="eggNOG" id="COG3909">
    <property type="taxonomic scope" value="Bacteria"/>
</dbReference>
<dbReference type="OrthoDB" id="7596534at2"/>
<dbReference type="PhylomeDB" id="P00148"/>
<dbReference type="EvolutionaryTrace" id="P00148"/>
<dbReference type="Proteomes" id="UP000002703">
    <property type="component" value="Chromosome 1"/>
</dbReference>
<dbReference type="GO" id="GO:0042597">
    <property type="term" value="C:periplasmic space"/>
    <property type="evidence" value="ECO:0007669"/>
    <property type="project" value="InterPro"/>
</dbReference>
<dbReference type="GO" id="GO:0009055">
    <property type="term" value="F:electron transfer activity"/>
    <property type="evidence" value="ECO:0007669"/>
    <property type="project" value="InterPro"/>
</dbReference>
<dbReference type="GO" id="GO:0020037">
    <property type="term" value="F:heme binding"/>
    <property type="evidence" value="ECO:0007669"/>
    <property type="project" value="InterPro"/>
</dbReference>
<dbReference type="GO" id="GO:0005506">
    <property type="term" value="F:iron ion binding"/>
    <property type="evidence" value="ECO:0007669"/>
    <property type="project" value="InterPro"/>
</dbReference>
<dbReference type="GO" id="GO:0022900">
    <property type="term" value="P:electron transport chain"/>
    <property type="evidence" value="ECO:0007669"/>
    <property type="project" value="InterPro"/>
</dbReference>
<dbReference type="Gene3D" id="1.20.120.10">
    <property type="entry name" value="Cytochrome c/b562"/>
    <property type="match status" value="1"/>
</dbReference>
<dbReference type="InterPro" id="IPR010980">
    <property type="entry name" value="Cyt_c/b562"/>
</dbReference>
<dbReference type="InterPro" id="IPR002321">
    <property type="entry name" value="Cyt_c_II"/>
</dbReference>
<dbReference type="InterPro" id="IPR012127">
    <property type="entry name" value="Cyt_c_prime"/>
</dbReference>
<dbReference type="InterPro" id="IPR015984">
    <property type="entry name" value="Cyt_c_prime_subgr"/>
</dbReference>
<dbReference type="Pfam" id="PF01322">
    <property type="entry name" value="Cytochrom_C_2"/>
    <property type="match status" value="1"/>
</dbReference>
<dbReference type="PIRSF" id="PIRSF000027">
    <property type="entry name" value="Cytc_c_prime"/>
    <property type="match status" value="1"/>
</dbReference>
<dbReference type="PRINTS" id="PR00608">
    <property type="entry name" value="CYTCHROMECII"/>
</dbReference>
<dbReference type="SUPFAM" id="SSF47175">
    <property type="entry name" value="Cytochromes"/>
    <property type="match status" value="1"/>
</dbReference>
<dbReference type="PROSITE" id="PS51009">
    <property type="entry name" value="CYTCII"/>
    <property type="match status" value="1"/>
</dbReference>
<name>CYCP_CERS4</name>
<comment type="function">
    <text>Cytochrome c' is the most widely occurring bacterial c-type cytochrome. Cytochromes c' are high-spin proteins and the heme has no sixth ligand. Their exact function is not known.</text>
</comment>
<comment type="subunit">
    <text evidence="4">Monomer and homodimer.</text>
</comment>
<comment type="PTM">
    <text evidence="2">Binds 1 heme c group covalently per subunit.</text>
</comment>
<keyword id="KW-0002">3D-structure</keyword>
<keyword id="KW-0903">Direct protein sequencing</keyword>
<keyword id="KW-0249">Electron transport</keyword>
<keyword id="KW-0349">Heme</keyword>
<keyword id="KW-0408">Iron</keyword>
<keyword id="KW-0479">Metal-binding</keyword>
<keyword id="KW-1185">Reference proteome</keyword>
<keyword id="KW-0732">Signal</keyword>
<keyword id="KW-0813">Transport</keyword>
<protein>
    <recommendedName>
        <fullName>Cytochrome c'</fullName>
    </recommendedName>
</protein>
<sequence>MRRVLLATLMAALPAAAMAADAEHVVEARKGYFSLVALEFGPLAAMAKGEMPYDAAAAKAHASDLVTLTKYDPSDLYAPGTSADDVKGTAAKAAIWQDADGFQAKGMAFFEAVAALEPAAGAGQKELAAAVGKVGGTCKSCHDDFRVKR</sequence>
<feature type="signal peptide" evidence="1">
    <location>
        <begin position="1"/>
        <end position="19"/>
    </location>
</feature>
<feature type="chain" id="PRO_0000045786" description="Cytochrome c'">
    <location>
        <begin position="20"/>
        <end position="149"/>
    </location>
</feature>
<feature type="binding site" evidence="2 5">
    <location>
        <position position="29"/>
    </location>
    <ligand>
        <name>heme c</name>
        <dbReference type="ChEBI" id="CHEBI:61717"/>
    </ligand>
</feature>
<feature type="binding site" evidence="2 5">
    <location>
        <position position="89"/>
    </location>
    <ligand>
        <name>heme c</name>
        <dbReference type="ChEBI" id="CHEBI:61717"/>
    </ligand>
</feature>
<feature type="binding site" evidence="2 5">
    <location>
        <position position="90"/>
    </location>
    <ligand>
        <name>heme c</name>
        <dbReference type="ChEBI" id="CHEBI:61717"/>
    </ligand>
</feature>
<feature type="binding site" description="covalent" evidence="2 5">
    <location>
        <position position="138"/>
    </location>
    <ligand>
        <name>heme c</name>
        <dbReference type="ChEBI" id="CHEBI:61717"/>
    </ligand>
</feature>
<feature type="binding site" description="covalent" evidence="2 5">
    <location>
        <position position="141"/>
    </location>
    <ligand>
        <name>heme c</name>
        <dbReference type="ChEBI" id="CHEBI:61717"/>
    </ligand>
</feature>
<feature type="binding site" description="axial binding residue" evidence="2 5">
    <location>
        <position position="142"/>
    </location>
    <ligand>
        <name>heme c</name>
        <dbReference type="ChEBI" id="CHEBI:61717"/>
    </ligand>
    <ligandPart>
        <name>Fe</name>
        <dbReference type="ChEBI" id="CHEBI:18248"/>
    </ligandPart>
</feature>
<feature type="sequence conflict" description="In Ref. 2; AA sequence." evidence="3" ref="2">
    <original>GT</original>
    <variation>TG</variation>
    <location>
        <begin position="136"/>
        <end position="137"/>
    </location>
</feature>
<feature type="helix" evidence="6">
    <location>
        <begin position="22"/>
        <end position="47"/>
    </location>
</feature>
<feature type="helix" evidence="6">
    <location>
        <begin position="55"/>
        <end position="70"/>
    </location>
</feature>
<feature type="helix" evidence="6">
    <location>
        <begin position="73"/>
        <end position="77"/>
    </location>
</feature>
<feature type="turn" evidence="6">
    <location>
        <begin position="83"/>
        <end position="85"/>
    </location>
</feature>
<feature type="strand" evidence="6">
    <location>
        <begin position="86"/>
        <end position="88"/>
    </location>
</feature>
<feature type="helix" evidence="6">
    <location>
        <begin position="94"/>
        <end position="97"/>
    </location>
</feature>
<feature type="helix" evidence="6">
    <location>
        <begin position="99"/>
        <end position="120"/>
    </location>
</feature>
<feature type="helix" evidence="6">
    <location>
        <begin position="124"/>
        <end position="145"/>
    </location>
</feature>
<gene>
    <name type="primary">cycP</name>
    <name type="ordered locus">RHOS4_20780</name>
    <name type="ORF">RSP_0474</name>
</gene>
<organism>
    <name type="scientific">Cereibacter sphaeroides (strain ATCC 17023 / DSM 158 / JCM 6121 / CCUG 31486 / LMG 2827 / NBRC 12203 / NCIMB 8253 / ATH 2.4.1.)</name>
    <name type="common">Rhodobacter sphaeroides</name>
    <dbReference type="NCBI Taxonomy" id="272943"/>
    <lineage>
        <taxon>Bacteria</taxon>
        <taxon>Pseudomonadati</taxon>
        <taxon>Pseudomonadota</taxon>
        <taxon>Alphaproteobacteria</taxon>
        <taxon>Rhodobacterales</taxon>
        <taxon>Paracoccaceae</taxon>
        <taxon>Cereibacter</taxon>
    </lineage>
</organism>
<accession>P00148</accession>
<accession>Q3J0N8</accession>
<reference key="1">
    <citation type="submission" date="2005-09" db="EMBL/GenBank/DDBJ databases">
        <title>Complete sequence of chromosome 1 of Rhodobacter sphaeroides 2.4.1.</title>
        <authorList>
            <person name="Copeland A."/>
            <person name="Lucas S."/>
            <person name="Lapidus A."/>
            <person name="Barry K."/>
            <person name="Detter J.C."/>
            <person name="Glavina T."/>
            <person name="Hammon N."/>
            <person name="Israni S."/>
            <person name="Pitluck S."/>
            <person name="Richardson P."/>
            <person name="Mackenzie C."/>
            <person name="Choudhary M."/>
            <person name="Larimer F."/>
            <person name="Hauser L.J."/>
            <person name="Land M."/>
            <person name="Donohue T.J."/>
            <person name="Kaplan S."/>
        </authorList>
    </citation>
    <scope>NUCLEOTIDE SEQUENCE [LARGE SCALE GENOMIC DNA]</scope>
    <source>
        <strain>ATCC 17023 / DSM 158 / JCM 6121 / CCUG 31486 / LMG 2827 / NBRC 12203 / NCIMB 8253 / ATH 2.4.1.</strain>
    </source>
</reference>
<reference key="2">
    <citation type="journal article" date="1981" name="Proc. Natl. Acad. Sci. U.S.A.">
        <title>Amino acid sequences of bacterial cytochromes c' and c-556.</title>
        <authorList>
            <person name="Ambler R.P."/>
            <person name="Bartsch R.G."/>
            <person name="Daniel M."/>
            <person name="Kamen M.D."/>
            <person name="McLellan L."/>
            <person name="Meyer T.E."/>
            <person name="van Beeumen J."/>
        </authorList>
    </citation>
    <scope>PROTEIN SEQUENCE OF 20-149</scope>
</reference>
<reference evidence="5" key="3">
    <citation type="journal article" date="2003" name="J. Chem. Cryst.">
        <title>High Resolution Crystal Structure of Ferricytochrome C' from Rhodobacter Sphaeroides.</title>
        <authorList>
            <person name="Ramirez L.M."/>
            <person name="Axelrod H.L."/>
            <person name="Herron S.R."/>
            <person name="Rupp B."/>
            <person name="Allen J.P."/>
            <person name="Kantardjieff K.A."/>
        </authorList>
    </citation>
    <scope>X-RAY CRYSTALLOGRAPHY (1.80 ANGSTROMS) OF 20-149 IN COMPLEX WITH HEME C</scope>
</reference>
<evidence type="ECO:0000269" key="1">
    <source>
    </source>
</evidence>
<evidence type="ECO:0000269" key="2">
    <source ref="3"/>
</evidence>
<evidence type="ECO:0000305" key="3"/>
<evidence type="ECO:0000305" key="4">
    <source ref="3"/>
</evidence>
<evidence type="ECO:0007744" key="5">
    <source>
        <dbReference type="PDB" id="1GQA"/>
    </source>
</evidence>
<evidence type="ECO:0007829" key="6">
    <source>
        <dbReference type="PDB" id="1GQA"/>
    </source>
</evidence>